<gene>
    <name evidence="1" type="primary">murI</name>
    <name type="ordered locus">SPCG_1854</name>
</gene>
<protein>
    <recommendedName>
        <fullName evidence="1">Glutamate racemase</fullName>
        <ecNumber evidence="1">5.1.1.3</ecNumber>
    </recommendedName>
</protein>
<comment type="function">
    <text evidence="1">Provides the (R)-glutamate required for cell wall biosynthesis.</text>
</comment>
<comment type="catalytic activity">
    <reaction evidence="1">
        <text>L-glutamate = D-glutamate</text>
        <dbReference type="Rhea" id="RHEA:12813"/>
        <dbReference type="ChEBI" id="CHEBI:29985"/>
        <dbReference type="ChEBI" id="CHEBI:29986"/>
        <dbReference type="EC" id="5.1.1.3"/>
    </reaction>
</comment>
<comment type="pathway">
    <text evidence="1">Cell wall biogenesis; peptidoglycan biosynthesis.</text>
</comment>
<comment type="similarity">
    <text evidence="1">Belongs to the aspartate/glutamate racemases family.</text>
</comment>
<feature type="chain" id="PRO_1000114067" description="Glutamate racemase">
    <location>
        <begin position="1"/>
        <end position="264"/>
    </location>
</feature>
<feature type="active site" description="Proton donor/acceptor" evidence="1">
    <location>
        <position position="73"/>
    </location>
</feature>
<feature type="active site" description="Proton donor/acceptor" evidence="1">
    <location>
        <position position="183"/>
    </location>
</feature>
<feature type="binding site" evidence="1">
    <location>
        <begin position="10"/>
        <end position="11"/>
    </location>
    <ligand>
        <name>substrate</name>
    </ligand>
</feature>
<feature type="binding site" evidence="1">
    <location>
        <begin position="42"/>
        <end position="43"/>
    </location>
    <ligand>
        <name>substrate</name>
    </ligand>
</feature>
<feature type="binding site" evidence="1">
    <location>
        <begin position="74"/>
        <end position="75"/>
    </location>
    <ligand>
        <name>substrate</name>
    </ligand>
</feature>
<feature type="binding site" evidence="1">
    <location>
        <begin position="184"/>
        <end position="185"/>
    </location>
    <ligand>
        <name>substrate</name>
    </ligand>
</feature>
<sequence>MDNRPIGFLDSGVGGLTVVRELMRQLPHEEIVYIGDSARAPYGPRPAEQIREYTWQLVNFLLTKDVKMIVIACNTATAVVWEEIKAQLDIPVLGVILPGASAAIKSSQGGKIGVIGTPMTVQSDIYRQKIHDLDPDLQVESLACPKFAPLVESGALSTSVTKKVVYETLRPLVGKVDSLILGCTHYPLLRPIIQNVMGPKVQLIDSGAECVRDISVLLNYFEINRGRDAGPLHHRFYTTASSQSFAQIGEEWLEKEIHVEHVEL</sequence>
<accession>B2ISX9</accession>
<evidence type="ECO:0000255" key="1">
    <source>
        <dbReference type="HAMAP-Rule" id="MF_00258"/>
    </source>
</evidence>
<name>MURI_STRPS</name>
<organism>
    <name type="scientific">Streptococcus pneumoniae (strain CGSP14)</name>
    <dbReference type="NCBI Taxonomy" id="516950"/>
    <lineage>
        <taxon>Bacteria</taxon>
        <taxon>Bacillati</taxon>
        <taxon>Bacillota</taxon>
        <taxon>Bacilli</taxon>
        <taxon>Lactobacillales</taxon>
        <taxon>Streptococcaceae</taxon>
        <taxon>Streptococcus</taxon>
    </lineage>
</organism>
<reference key="1">
    <citation type="journal article" date="2009" name="BMC Genomics">
        <title>Genome evolution driven by host adaptations results in a more virulent and antimicrobial-resistant Streptococcus pneumoniae serotype 14.</title>
        <authorList>
            <person name="Ding F."/>
            <person name="Tang P."/>
            <person name="Hsu M.-H."/>
            <person name="Cui P."/>
            <person name="Hu S."/>
            <person name="Yu J."/>
            <person name="Chiu C.-H."/>
        </authorList>
    </citation>
    <scope>NUCLEOTIDE SEQUENCE [LARGE SCALE GENOMIC DNA]</scope>
    <source>
        <strain>CGSP14</strain>
    </source>
</reference>
<proteinExistence type="inferred from homology"/>
<dbReference type="EC" id="5.1.1.3" evidence="1"/>
<dbReference type="EMBL" id="CP001033">
    <property type="protein sequence ID" value="ACB91106.1"/>
    <property type="molecule type" value="Genomic_DNA"/>
</dbReference>
<dbReference type="SMR" id="B2ISX9"/>
<dbReference type="KEGG" id="spw:SPCG_1854"/>
<dbReference type="HOGENOM" id="CLU_052344_0_2_9"/>
<dbReference type="UniPathway" id="UPA00219"/>
<dbReference type="GO" id="GO:0008881">
    <property type="term" value="F:glutamate racemase activity"/>
    <property type="evidence" value="ECO:0007669"/>
    <property type="project" value="UniProtKB-UniRule"/>
</dbReference>
<dbReference type="GO" id="GO:0071555">
    <property type="term" value="P:cell wall organization"/>
    <property type="evidence" value="ECO:0007669"/>
    <property type="project" value="UniProtKB-KW"/>
</dbReference>
<dbReference type="GO" id="GO:0009252">
    <property type="term" value="P:peptidoglycan biosynthetic process"/>
    <property type="evidence" value="ECO:0007669"/>
    <property type="project" value="UniProtKB-UniRule"/>
</dbReference>
<dbReference type="GO" id="GO:0008360">
    <property type="term" value="P:regulation of cell shape"/>
    <property type="evidence" value="ECO:0007669"/>
    <property type="project" value="UniProtKB-KW"/>
</dbReference>
<dbReference type="FunFam" id="3.40.50.1860:FF:000002">
    <property type="entry name" value="Glutamate racemase"/>
    <property type="match status" value="1"/>
</dbReference>
<dbReference type="Gene3D" id="3.40.50.1860">
    <property type="match status" value="2"/>
</dbReference>
<dbReference type="HAMAP" id="MF_00258">
    <property type="entry name" value="Glu_racemase"/>
    <property type="match status" value="1"/>
</dbReference>
<dbReference type="InterPro" id="IPR015942">
    <property type="entry name" value="Asp/Glu/hydantoin_racemase"/>
</dbReference>
<dbReference type="InterPro" id="IPR001920">
    <property type="entry name" value="Asp/Glu_race"/>
</dbReference>
<dbReference type="InterPro" id="IPR018187">
    <property type="entry name" value="Asp/Glu_racemase_AS_1"/>
</dbReference>
<dbReference type="InterPro" id="IPR033134">
    <property type="entry name" value="Asp/Glu_racemase_AS_2"/>
</dbReference>
<dbReference type="InterPro" id="IPR004391">
    <property type="entry name" value="Glu_race"/>
</dbReference>
<dbReference type="NCBIfam" id="TIGR00067">
    <property type="entry name" value="glut_race"/>
    <property type="match status" value="1"/>
</dbReference>
<dbReference type="NCBIfam" id="NF002035">
    <property type="entry name" value="PRK00865.1-3"/>
    <property type="match status" value="1"/>
</dbReference>
<dbReference type="PANTHER" id="PTHR21198">
    <property type="entry name" value="GLUTAMATE RACEMASE"/>
    <property type="match status" value="1"/>
</dbReference>
<dbReference type="PANTHER" id="PTHR21198:SF2">
    <property type="entry name" value="GLUTAMATE RACEMASE"/>
    <property type="match status" value="1"/>
</dbReference>
<dbReference type="Pfam" id="PF01177">
    <property type="entry name" value="Asp_Glu_race"/>
    <property type="match status" value="1"/>
</dbReference>
<dbReference type="SUPFAM" id="SSF53681">
    <property type="entry name" value="Aspartate/glutamate racemase"/>
    <property type="match status" value="2"/>
</dbReference>
<dbReference type="PROSITE" id="PS00923">
    <property type="entry name" value="ASP_GLU_RACEMASE_1"/>
    <property type="match status" value="1"/>
</dbReference>
<dbReference type="PROSITE" id="PS00924">
    <property type="entry name" value="ASP_GLU_RACEMASE_2"/>
    <property type="match status" value="1"/>
</dbReference>
<keyword id="KW-0133">Cell shape</keyword>
<keyword id="KW-0961">Cell wall biogenesis/degradation</keyword>
<keyword id="KW-0413">Isomerase</keyword>
<keyword id="KW-0573">Peptidoglycan synthesis</keyword>